<organism>
    <name type="scientific">Escherichia coli O1:K1 / APEC</name>
    <dbReference type="NCBI Taxonomy" id="405955"/>
    <lineage>
        <taxon>Bacteria</taxon>
        <taxon>Pseudomonadati</taxon>
        <taxon>Pseudomonadota</taxon>
        <taxon>Gammaproteobacteria</taxon>
        <taxon>Enterobacterales</taxon>
        <taxon>Enterobacteriaceae</taxon>
        <taxon>Escherichia</taxon>
    </lineage>
</organism>
<name>RHAR_ECOK1</name>
<protein>
    <recommendedName>
        <fullName evidence="1">HTH-type transcriptional activator RhaR</fullName>
    </recommendedName>
    <alternativeName>
        <fullName evidence="1">L-rhamnose operon transcriptional activator RhaR</fullName>
    </alternativeName>
</protein>
<feature type="chain" id="PRO_0000292772" description="HTH-type transcriptional activator RhaR">
    <location>
        <begin position="1"/>
        <end position="282"/>
    </location>
</feature>
<feature type="domain" description="HTH araC/xylS-type" evidence="1">
    <location>
        <begin position="179"/>
        <end position="277"/>
    </location>
</feature>
<feature type="DNA-binding region" description="H-T-H motif" evidence="1">
    <location>
        <begin position="196"/>
        <end position="217"/>
    </location>
</feature>
<feature type="DNA-binding region" description="H-T-H motif" evidence="1">
    <location>
        <begin position="244"/>
        <end position="267"/>
    </location>
</feature>
<feature type="site" description="Interaction with sigma-70" evidence="1">
    <location>
        <position position="246"/>
    </location>
</feature>
<sequence>MAHQLKLLKDDFFASDQQAVAVADRYPQDVFAEHTHDFCELVIVWRGNGLHVLNDRPYRITRGDLFYIHADDKHSYASVNDLVLQNIIYCPERLKLNLDWQGAIPGFNASAGQPHWRLGSVGMAQARQVIGQLEHESSQHVPFANEMAELLFGQLVMLLNRHRYTSDSLPPTSSETLLDKLITRLAASLKSPFALDKFCDEASCSERVLRQQFRQQTGMTINQYLRQVRVCHAQYLLQHSRLLISDISTECGFEDSNYFSVVFTRETGMTPSQWRHLNSQKD</sequence>
<proteinExistence type="inferred from homology"/>
<dbReference type="EMBL" id="CP000468">
    <property type="protein sequence ID" value="ABJ03373.1"/>
    <property type="status" value="ALT_INIT"/>
    <property type="molecule type" value="Genomic_DNA"/>
</dbReference>
<dbReference type="RefSeq" id="WP_001350870.1">
    <property type="nucleotide sequence ID" value="NZ_CADILS010000014.1"/>
</dbReference>
<dbReference type="SMR" id="A1AI83"/>
<dbReference type="KEGG" id="ecv:APECO1_2562"/>
<dbReference type="HOGENOM" id="CLU_000445_88_5_6"/>
<dbReference type="Proteomes" id="UP000008216">
    <property type="component" value="Chromosome"/>
</dbReference>
<dbReference type="GO" id="GO:0005737">
    <property type="term" value="C:cytoplasm"/>
    <property type="evidence" value="ECO:0007669"/>
    <property type="project" value="UniProtKB-SubCell"/>
</dbReference>
<dbReference type="GO" id="GO:0003700">
    <property type="term" value="F:DNA-binding transcription factor activity"/>
    <property type="evidence" value="ECO:0007669"/>
    <property type="project" value="UniProtKB-UniRule"/>
</dbReference>
<dbReference type="GO" id="GO:0043565">
    <property type="term" value="F:sequence-specific DNA binding"/>
    <property type="evidence" value="ECO:0007669"/>
    <property type="project" value="InterPro"/>
</dbReference>
<dbReference type="GO" id="GO:0045893">
    <property type="term" value="P:positive regulation of DNA-templated transcription"/>
    <property type="evidence" value="ECO:0007669"/>
    <property type="project" value="UniProtKB-UniRule"/>
</dbReference>
<dbReference type="GO" id="GO:0019299">
    <property type="term" value="P:rhamnose metabolic process"/>
    <property type="evidence" value="ECO:0007669"/>
    <property type="project" value="UniProtKB-UniRule"/>
</dbReference>
<dbReference type="CDD" id="cd06977">
    <property type="entry name" value="cupin_RhaR_RhaS-like_N"/>
    <property type="match status" value="1"/>
</dbReference>
<dbReference type="Gene3D" id="1.10.10.60">
    <property type="entry name" value="Homeodomain-like"/>
    <property type="match status" value="2"/>
</dbReference>
<dbReference type="Gene3D" id="2.60.120.10">
    <property type="entry name" value="Jelly Rolls"/>
    <property type="match status" value="1"/>
</dbReference>
<dbReference type="HAMAP" id="MF_01533">
    <property type="entry name" value="HTH_type_RhaR"/>
    <property type="match status" value="1"/>
</dbReference>
<dbReference type="InterPro" id="IPR003313">
    <property type="entry name" value="AraC-bd"/>
</dbReference>
<dbReference type="InterPro" id="IPR009057">
    <property type="entry name" value="Homeodomain-like_sf"/>
</dbReference>
<dbReference type="InterPro" id="IPR018060">
    <property type="entry name" value="HTH_AraC"/>
</dbReference>
<dbReference type="InterPro" id="IPR018062">
    <property type="entry name" value="HTH_AraC-typ_CS"/>
</dbReference>
<dbReference type="InterPro" id="IPR047220">
    <property type="entry name" value="RhaR_RhaS-like_N"/>
</dbReference>
<dbReference type="InterPro" id="IPR014710">
    <property type="entry name" value="RmlC-like_jellyroll"/>
</dbReference>
<dbReference type="InterPro" id="IPR011051">
    <property type="entry name" value="RmlC_Cupin_sf"/>
</dbReference>
<dbReference type="InterPro" id="IPR023699">
    <property type="entry name" value="Tscrpt_act_RhaR"/>
</dbReference>
<dbReference type="InterPro" id="IPR020449">
    <property type="entry name" value="Tscrpt_reg_AraC-type_HTH"/>
</dbReference>
<dbReference type="NCBIfam" id="NF010025">
    <property type="entry name" value="PRK13500.1"/>
    <property type="match status" value="1"/>
</dbReference>
<dbReference type="NCBIfam" id="NF010026">
    <property type="entry name" value="PRK13501.1"/>
    <property type="match status" value="1"/>
</dbReference>
<dbReference type="NCBIfam" id="NF010027">
    <property type="entry name" value="PRK13502.1"/>
    <property type="match status" value="1"/>
</dbReference>
<dbReference type="PANTHER" id="PTHR43280">
    <property type="entry name" value="ARAC-FAMILY TRANSCRIPTIONAL REGULATOR"/>
    <property type="match status" value="1"/>
</dbReference>
<dbReference type="PANTHER" id="PTHR43280:SF13">
    <property type="entry name" value="HTH-TYPE TRANSCRIPTIONAL ACTIVATOR RHAR"/>
    <property type="match status" value="1"/>
</dbReference>
<dbReference type="Pfam" id="PF02311">
    <property type="entry name" value="AraC_binding"/>
    <property type="match status" value="1"/>
</dbReference>
<dbReference type="Pfam" id="PF12833">
    <property type="entry name" value="HTH_18"/>
    <property type="match status" value="1"/>
</dbReference>
<dbReference type="PRINTS" id="PR00032">
    <property type="entry name" value="HTHARAC"/>
</dbReference>
<dbReference type="SMART" id="SM00342">
    <property type="entry name" value="HTH_ARAC"/>
    <property type="match status" value="1"/>
</dbReference>
<dbReference type="SUPFAM" id="SSF46689">
    <property type="entry name" value="Homeodomain-like"/>
    <property type="match status" value="2"/>
</dbReference>
<dbReference type="SUPFAM" id="SSF51182">
    <property type="entry name" value="RmlC-like cupins"/>
    <property type="match status" value="1"/>
</dbReference>
<dbReference type="PROSITE" id="PS00041">
    <property type="entry name" value="HTH_ARAC_FAMILY_1"/>
    <property type="match status" value="1"/>
</dbReference>
<dbReference type="PROSITE" id="PS01124">
    <property type="entry name" value="HTH_ARAC_FAMILY_2"/>
    <property type="match status" value="1"/>
</dbReference>
<gene>
    <name evidence="1" type="primary">rhaR</name>
    <name type="ordered locus">Ecok1_38790</name>
    <name type="ORF">APECO1_2562</name>
</gene>
<accession>A1AI83</accession>
<keyword id="KW-0010">Activator</keyword>
<keyword id="KW-0963">Cytoplasm</keyword>
<keyword id="KW-0238">DNA-binding</keyword>
<keyword id="KW-1185">Reference proteome</keyword>
<keyword id="KW-0677">Repeat</keyword>
<keyword id="KW-0684">Rhamnose metabolism</keyword>
<keyword id="KW-0804">Transcription</keyword>
<keyword id="KW-0805">Transcription regulation</keyword>
<reference key="1">
    <citation type="journal article" date="2007" name="J. Bacteriol.">
        <title>The genome sequence of avian pathogenic Escherichia coli strain O1:K1:H7 shares strong similarities with human extraintestinal pathogenic E. coli genomes.</title>
        <authorList>
            <person name="Johnson T.J."/>
            <person name="Kariyawasam S."/>
            <person name="Wannemuehler Y."/>
            <person name="Mangiamele P."/>
            <person name="Johnson S.J."/>
            <person name="Doetkott C."/>
            <person name="Skyberg J.A."/>
            <person name="Lynne A.M."/>
            <person name="Johnson J.R."/>
            <person name="Nolan L.K."/>
        </authorList>
    </citation>
    <scope>NUCLEOTIDE SEQUENCE [LARGE SCALE GENOMIC DNA]</scope>
</reference>
<comment type="function">
    <text evidence="1">Activates expression of the rhaSR operon in response to L-rhamnose.</text>
</comment>
<comment type="subunit">
    <text evidence="1">Binds DNA as a dimer.</text>
</comment>
<comment type="subcellular location">
    <subcellularLocation>
        <location evidence="1">Cytoplasm</location>
    </subcellularLocation>
</comment>
<comment type="sequence caution" evidence="2">
    <conflict type="erroneous initiation">
        <sequence resource="EMBL-CDS" id="ABJ03373"/>
    </conflict>
</comment>
<evidence type="ECO:0000255" key="1">
    <source>
        <dbReference type="HAMAP-Rule" id="MF_01533"/>
    </source>
</evidence>
<evidence type="ECO:0000305" key="2"/>